<protein>
    <recommendedName>
        <fullName evidence="1">Isoleucine--tRNA ligase</fullName>
        <ecNumber evidence="1">6.1.1.5</ecNumber>
    </recommendedName>
    <alternativeName>
        <fullName evidence="1">Isoleucyl-tRNA synthetase</fullName>
        <shortName evidence="1">IleRS</shortName>
    </alternativeName>
</protein>
<name>SYI_PELUB</name>
<accession>Q4FPA9</accession>
<feature type="chain" id="PRO_0000098435" description="Isoleucine--tRNA ligase">
    <location>
        <begin position="1"/>
        <end position="905"/>
    </location>
</feature>
<feature type="short sequence motif" description="'HIGH' region">
    <location>
        <begin position="56"/>
        <end position="66"/>
    </location>
</feature>
<feature type="short sequence motif" description="'KMSKS' region">
    <location>
        <begin position="604"/>
        <end position="608"/>
    </location>
</feature>
<feature type="binding site" evidence="1">
    <location>
        <position position="563"/>
    </location>
    <ligand>
        <name>L-isoleucyl-5'-AMP</name>
        <dbReference type="ChEBI" id="CHEBI:178002"/>
    </ligand>
</feature>
<feature type="binding site" evidence="1">
    <location>
        <position position="607"/>
    </location>
    <ligand>
        <name>ATP</name>
        <dbReference type="ChEBI" id="CHEBI:30616"/>
    </ligand>
</feature>
<organism>
    <name type="scientific">Pelagibacter ubique (strain HTCC1062)</name>
    <dbReference type="NCBI Taxonomy" id="335992"/>
    <lineage>
        <taxon>Bacteria</taxon>
        <taxon>Pseudomonadati</taxon>
        <taxon>Pseudomonadota</taxon>
        <taxon>Alphaproteobacteria</taxon>
        <taxon>Candidatus Pelagibacterales</taxon>
        <taxon>Candidatus Pelagibacteraceae</taxon>
        <taxon>Candidatus Pelagibacter</taxon>
    </lineage>
</organism>
<evidence type="ECO:0000255" key="1">
    <source>
        <dbReference type="HAMAP-Rule" id="MF_02002"/>
    </source>
</evidence>
<reference key="1">
    <citation type="journal article" date="2005" name="Science">
        <title>Genome streamlining in a cosmopolitan oceanic bacterium.</title>
        <authorList>
            <person name="Giovannoni S.J."/>
            <person name="Tripp H.J."/>
            <person name="Givan S."/>
            <person name="Podar M."/>
            <person name="Vergin K.L."/>
            <person name="Baptista D."/>
            <person name="Bibbs L."/>
            <person name="Eads J."/>
            <person name="Richardson T.H."/>
            <person name="Noordewier M."/>
            <person name="Rappe M.S."/>
            <person name="Short J.M."/>
            <person name="Carrington J.C."/>
            <person name="Mathur E.J."/>
        </authorList>
    </citation>
    <scope>NUCLEOTIDE SEQUENCE [LARGE SCALE GENOMIC DNA]</scope>
    <source>
        <strain>HTCC1062</strain>
    </source>
</reference>
<keyword id="KW-0030">Aminoacyl-tRNA synthetase</keyword>
<keyword id="KW-0067">ATP-binding</keyword>
<keyword id="KW-0963">Cytoplasm</keyword>
<keyword id="KW-0436">Ligase</keyword>
<keyword id="KW-0547">Nucleotide-binding</keyword>
<keyword id="KW-0648">Protein biosynthesis</keyword>
<keyword id="KW-1185">Reference proteome</keyword>
<gene>
    <name evidence="1" type="primary">ileS</name>
    <name type="ordered locus">SAR11_0158</name>
</gene>
<dbReference type="EC" id="6.1.1.5" evidence="1"/>
<dbReference type="EMBL" id="CP000084">
    <property type="protein sequence ID" value="AAZ20980.1"/>
    <property type="molecule type" value="Genomic_DNA"/>
</dbReference>
<dbReference type="RefSeq" id="WP_006997752.1">
    <property type="nucleotide sequence ID" value="NC_007205.1"/>
</dbReference>
<dbReference type="SMR" id="Q4FPA9"/>
<dbReference type="STRING" id="335992.SAR11_0158"/>
<dbReference type="GeneID" id="66294658"/>
<dbReference type="KEGG" id="pub:SAR11_0158"/>
<dbReference type="eggNOG" id="COG0060">
    <property type="taxonomic scope" value="Bacteria"/>
</dbReference>
<dbReference type="HOGENOM" id="CLU_001493_7_0_5"/>
<dbReference type="OrthoDB" id="9810365at2"/>
<dbReference type="Proteomes" id="UP000002528">
    <property type="component" value="Chromosome"/>
</dbReference>
<dbReference type="GO" id="GO:0005829">
    <property type="term" value="C:cytosol"/>
    <property type="evidence" value="ECO:0007669"/>
    <property type="project" value="TreeGrafter"/>
</dbReference>
<dbReference type="GO" id="GO:0002161">
    <property type="term" value="F:aminoacyl-tRNA deacylase activity"/>
    <property type="evidence" value="ECO:0007669"/>
    <property type="project" value="InterPro"/>
</dbReference>
<dbReference type="GO" id="GO:0005524">
    <property type="term" value="F:ATP binding"/>
    <property type="evidence" value="ECO:0007669"/>
    <property type="project" value="UniProtKB-UniRule"/>
</dbReference>
<dbReference type="GO" id="GO:0004822">
    <property type="term" value="F:isoleucine-tRNA ligase activity"/>
    <property type="evidence" value="ECO:0007669"/>
    <property type="project" value="UniProtKB-UniRule"/>
</dbReference>
<dbReference type="GO" id="GO:0000049">
    <property type="term" value="F:tRNA binding"/>
    <property type="evidence" value="ECO:0007669"/>
    <property type="project" value="InterPro"/>
</dbReference>
<dbReference type="GO" id="GO:0006428">
    <property type="term" value="P:isoleucyl-tRNA aminoacylation"/>
    <property type="evidence" value="ECO:0007669"/>
    <property type="project" value="UniProtKB-UniRule"/>
</dbReference>
<dbReference type="CDD" id="cd07960">
    <property type="entry name" value="Anticodon_Ia_Ile_BEm"/>
    <property type="match status" value="1"/>
</dbReference>
<dbReference type="CDD" id="cd00818">
    <property type="entry name" value="IleRS_core"/>
    <property type="match status" value="1"/>
</dbReference>
<dbReference type="FunFam" id="3.40.50.620:FF:000042">
    <property type="entry name" value="Isoleucine--tRNA ligase"/>
    <property type="match status" value="1"/>
</dbReference>
<dbReference type="Gene3D" id="1.10.730.20">
    <property type="match status" value="1"/>
</dbReference>
<dbReference type="Gene3D" id="3.40.50.620">
    <property type="entry name" value="HUPs"/>
    <property type="match status" value="2"/>
</dbReference>
<dbReference type="Gene3D" id="1.10.10.830">
    <property type="entry name" value="Ile-tRNA synthetase CP2 domain-like"/>
    <property type="match status" value="1"/>
</dbReference>
<dbReference type="HAMAP" id="MF_02002">
    <property type="entry name" value="Ile_tRNA_synth_type1"/>
    <property type="match status" value="1"/>
</dbReference>
<dbReference type="InterPro" id="IPR001412">
    <property type="entry name" value="aa-tRNA-synth_I_CS"/>
</dbReference>
<dbReference type="InterPro" id="IPR002300">
    <property type="entry name" value="aa-tRNA-synth_Ia"/>
</dbReference>
<dbReference type="InterPro" id="IPR033708">
    <property type="entry name" value="Anticodon_Ile_BEm"/>
</dbReference>
<dbReference type="InterPro" id="IPR002301">
    <property type="entry name" value="Ile-tRNA-ligase"/>
</dbReference>
<dbReference type="InterPro" id="IPR023585">
    <property type="entry name" value="Ile-tRNA-ligase_type1"/>
</dbReference>
<dbReference type="InterPro" id="IPR050081">
    <property type="entry name" value="Ile-tRNA_ligase"/>
</dbReference>
<dbReference type="InterPro" id="IPR013155">
    <property type="entry name" value="M/V/L/I-tRNA-synth_anticd-bd"/>
</dbReference>
<dbReference type="InterPro" id="IPR014729">
    <property type="entry name" value="Rossmann-like_a/b/a_fold"/>
</dbReference>
<dbReference type="InterPro" id="IPR009080">
    <property type="entry name" value="tRNAsynth_Ia_anticodon-bd"/>
</dbReference>
<dbReference type="InterPro" id="IPR009008">
    <property type="entry name" value="Val/Leu/Ile-tRNA-synth_edit"/>
</dbReference>
<dbReference type="NCBIfam" id="TIGR00392">
    <property type="entry name" value="ileS"/>
    <property type="match status" value="1"/>
</dbReference>
<dbReference type="PANTHER" id="PTHR42765:SF1">
    <property type="entry name" value="ISOLEUCINE--TRNA LIGASE, MITOCHONDRIAL"/>
    <property type="match status" value="1"/>
</dbReference>
<dbReference type="PANTHER" id="PTHR42765">
    <property type="entry name" value="SOLEUCYL-TRNA SYNTHETASE"/>
    <property type="match status" value="1"/>
</dbReference>
<dbReference type="Pfam" id="PF08264">
    <property type="entry name" value="Anticodon_1"/>
    <property type="match status" value="1"/>
</dbReference>
<dbReference type="Pfam" id="PF00133">
    <property type="entry name" value="tRNA-synt_1"/>
    <property type="match status" value="1"/>
</dbReference>
<dbReference type="PRINTS" id="PR00984">
    <property type="entry name" value="TRNASYNTHILE"/>
</dbReference>
<dbReference type="SUPFAM" id="SSF47323">
    <property type="entry name" value="Anticodon-binding domain of a subclass of class I aminoacyl-tRNA synthetases"/>
    <property type="match status" value="1"/>
</dbReference>
<dbReference type="SUPFAM" id="SSF52374">
    <property type="entry name" value="Nucleotidylyl transferase"/>
    <property type="match status" value="1"/>
</dbReference>
<dbReference type="SUPFAM" id="SSF50677">
    <property type="entry name" value="ValRS/IleRS/LeuRS editing domain"/>
    <property type="match status" value="1"/>
</dbReference>
<dbReference type="PROSITE" id="PS00178">
    <property type="entry name" value="AA_TRNA_LIGASE_I"/>
    <property type="match status" value="1"/>
</dbReference>
<proteinExistence type="inferred from homology"/>
<comment type="function">
    <text evidence="1">Catalyzes the attachment of isoleucine to tRNA(Ile). As IleRS can inadvertently accommodate and process structurally similar amino acids such as valine, to avoid such errors it has two additional distinct tRNA(Ile)-dependent editing activities. One activity is designated as 'pretransfer' editing and involves the hydrolysis of activated Val-AMP. The other activity is designated 'posttransfer' editing and involves deacylation of mischarged Val-tRNA(Ile).</text>
</comment>
<comment type="catalytic activity">
    <reaction evidence="1">
        <text>tRNA(Ile) + L-isoleucine + ATP = L-isoleucyl-tRNA(Ile) + AMP + diphosphate</text>
        <dbReference type="Rhea" id="RHEA:11060"/>
        <dbReference type="Rhea" id="RHEA-COMP:9666"/>
        <dbReference type="Rhea" id="RHEA-COMP:9695"/>
        <dbReference type="ChEBI" id="CHEBI:30616"/>
        <dbReference type="ChEBI" id="CHEBI:33019"/>
        <dbReference type="ChEBI" id="CHEBI:58045"/>
        <dbReference type="ChEBI" id="CHEBI:78442"/>
        <dbReference type="ChEBI" id="CHEBI:78528"/>
        <dbReference type="ChEBI" id="CHEBI:456215"/>
        <dbReference type="EC" id="6.1.1.5"/>
    </reaction>
</comment>
<comment type="subunit">
    <text evidence="1">Monomer.</text>
</comment>
<comment type="subcellular location">
    <subcellularLocation>
        <location evidence="1">Cytoplasm</location>
    </subcellularLocation>
</comment>
<comment type="domain">
    <text evidence="1">IleRS has two distinct active sites: one for aminoacylation and one for editing. The misactivated valine is translocated from the active site to the editing site, which sterically excludes the correctly activated isoleucine. The single editing site contains two valyl binding pockets, one specific for each substrate (Val-AMP or Val-tRNA(Ile)).</text>
</comment>
<comment type="similarity">
    <text evidence="1">Belongs to the class-I aminoacyl-tRNA synthetase family. IleS type 1 subfamily.</text>
</comment>
<sequence length="905" mass="105047">MSKENINLPKTAFSMKANLQNKEPEILEYWKKIDLYKELRKSNKGKEKFILHDGPPYANGNIHMGTALNKILKDIIVKFHQMDGKDSVYVPGWDCHGLPIEWKIEEQYKKNKKNKNEVPITEFRKECREFAEKWIEVHKTQFKRLGVVGDWENHYATMSFEAEAQIVRELGKFLKEGSLYRGFKPVLWSTVEKTALADAEVEYQDHKSDTIYTAFPVKKTNIKELENTDVIIWTTTPWTIPANKALAYNEALDYLIIELGDEGDFKNKKIVVAEALLESVIKDCEIKSYKEIKKFKGKDFKDTICSHPFLELGYDYDIPMLEARFVTTEQGTGIVHCAPSHGPDDFNLCLKYGIKAIETVDGDGKYTKNLPLFEGTHIFKANPIVIEKLKEQKKLLSNGELVHSYPHSWRSKAPLVHRATPQWFISMESHGLRKKALKALDDTKFYPDKGRERIKAMIETRPDWCVSRQRVWGVPLPIFVHKTTKEILVDDNVNENIASIYEKEGSDCWFSDSPQRFLGDKYKAEDYEKISDIVEVWFDSGCTHAFVLEKREDLQWPASMYLEGSDQHRGWFHSSLLESCGTRGRAPYESILSHGFVVDGKGLKMSKSVGNVIAPEDILKKYGADILRIWVASSNYAEDLRIDYSILEQHADSYRKIRNTFRYLLGNLNDDFQKIDLESLDIKQLPELERYMLHRVYELNNNFKNYFKSYDFHNLYKELLNFCTVDLSSFYFDIRKDALYCDSKNSDRRKSSIVVLNIILESLVKWFAPILSFTTEEIFTLINKEQKSIHLEQFMKYPESFQDEELHKKWIELKKIRDICNISIEAKRASKEIGSSLEASLIINLNKSLFEISKNVDFSEICITSSALVHQSNTDEIIIKTIKAEGNKCPVCWKINKVKCERHSD</sequence>